<organism>
    <name type="scientific">Thermotoga neapolitana (strain ATCC 49049 / DSM 4359 / NBRC 107923 / NS-E)</name>
    <dbReference type="NCBI Taxonomy" id="309803"/>
    <lineage>
        <taxon>Bacteria</taxon>
        <taxon>Thermotogati</taxon>
        <taxon>Thermotogota</taxon>
        <taxon>Thermotogae</taxon>
        <taxon>Thermotogales</taxon>
        <taxon>Thermotogaceae</taxon>
        <taxon>Thermotoga</taxon>
    </lineage>
</organism>
<sequence>MKVGVALSGGVDSAVALYLLLKEGHEVKAFHMKTKEDEFFLKKEIKKKVCCSPSDTADAIRIARSLGVEIEIVDVREVFREKVIEPFKRDLLRGLTPNPCVHCNRYVKFGYFMDYVLSQGFDAFASGHYARVEFSGKYGKKVIKKGVDGKKDQSYFLARIEPWRIEKLLFPNGIYTKEEIRRIAEEAGIHVAKKQESQDVCFIPDGSIENFLKDEGITLSEGKVITEKGEVVGHHRGYPLYTVGQRKGLKIEKFGERLYVREKIPESNVVVVSGLEGVFFSGLIAVDPVWHVDLPEEFRCVCRVRKKAEEAPAIVRVKNSEVEVRFEKKIFAVTPGQIAAFYDEDTLLGGAIIKEGIP</sequence>
<name>MNMA_THENN</name>
<comment type="function">
    <text evidence="1">Catalyzes the 2-thiolation of uridine at the wobble position (U34) of tRNA, leading to the formation of s(2)U34.</text>
</comment>
<comment type="catalytic activity">
    <reaction evidence="1">
        <text>S-sulfanyl-L-cysteinyl-[protein] + uridine(34) in tRNA + AH2 + ATP = 2-thiouridine(34) in tRNA + L-cysteinyl-[protein] + A + AMP + diphosphate + H(+)</text>
        <dbReference type="Rhea" id="RHEA:47032"/>
        <dbReference type="Rhea" id="RHEA-COMP:10131"/>
        <dbReference type="Rhea" id="RHEA-COMP:11726"/>
        <dbReference type="Rhea" id="RHEA-COMP:11727"/>
        <dbReference type="Rhea" id="RHEA-COMP:11728"/>
        <dbReference type="ChEBI" id="CHEBI:13193"/>
        <dbReference type="ChEBI" id="CHEBI:15378"/>
        <dbReference type="ChEBI" id="CHEBI:17499"/>
        <dbReference type="ChEBI" id="CHEBI:29950"/>
        <dbReference type="ChEBI" id="CHEBI:30616"/>
        <dbReference type="ChEBI" id="CHEBI:33019"/>
        <dbReference type="ChEBI" id="CHEBI:61963"/>
        <dbReference type="ChEBI" id="CHEBI:65315"/>
        <dbReference type="ChEBI" id="CHEBI:87170"/>
        <dbReference type="ChEBI" id="CHEBI:456215"/>
        <dbReference type="EC" id="2.8.1.13"/>
    </reaction>
</comment>
<comment type="subcellular location">
    <subcellularLocation>
        <location evidence="1">Cytoplasm</location>
    </subcellularLocation>
</comment>
<comment type="similarity">
    <text evidence="1">Belongs to the MnmA/TRMU family.</text>
</comment>
<protein>
    <recommendedName>
        <fullName evidence="1">tRNA-specific 2-thiouridylase MnmA</fullName>
        <ecNumber evidence="1">2.8.1.13</ecNumber>
    </recommendedName>
</protein>
<reference key="1">
    <citation type="submission" date="2007-11" db="EMBL/GenBank/DDBJ databases">
        <title>The genome sequence of the hyperthermophilic bacterium Thermotoga neapolitana.</title>
        <authorList>
            <person name="Lim S.K."/>
            <person name="Kim J.S."/>
            <person name="Cha S.H."/>
            <person name="Park B.C."/>
            <person name="Lee D.S."/>
            <person name="Tae H.S."/>
            <person name="Kim S.-J."/>
            <person name="Kim J.J."/>
            <person name="Park K.J."/>
            <person name="Lee S.Y."/>
        </authorList>
    </citation>
    <scope>NUCLEOTIDE SEQUENCE [LARGE SCALE GENOMIC DNA]</scope>
    <source>
        <strain>ATCC 49049 / DSM 4359 / NBRC 107923 / NS-E</strain>
    </source>
</reference>
<dbReference type="EC" id="2.8.1.13" evidence="1"/>
<dbReference type="EMBL" id="CP000916">
    <property type="protein sequence ID" value="ACM22327.1"/>
    <property type="molecule type" value="Genomic_DNA"/>
</dbReference>
<dbReference type="RefSeq" id="WP_012645037.1">
    <property type="nucleotide sequence ID" value="NC_011978.1"/>
</dbReference>
<dbReference type="SMR" id="B9KBD1"/>
<dbReference type="STRING" id="309803.CTN_0151"/>
<dbReference type="KEGG" id="tna:CTN_0151"/>
<dbReference type="eggNOG" id="COG0482">
    <property type="taxonomic scope" value="Bacteria"/>
</dbReference>
<dbReference type="HOGENOM" id="CLU_035188_1_0_0"/>
<dbReference type="Proteomes" id="UP000000445">
    <property type="component" value="Chromosome"/>
</dbReference>
<dbReference type="GO" id="GO:0005737">
    <property type="term" value="C:cytoplasm"/>
    <property type="evidence" value="ECO:0007669"/>
    <property type="project" value="UniProtKB-SubCell"/>
</dbReference>
<dbReference type="GO" id="GO:0005524">
    <property type="term" value="F:ATP binding"/>
    <property type="evidence" value="ECO:0007669"/>
    <property type="project" value="UniProtKB-KW"/>
</dbReference>
<dbReference type="GO" id="GO:0000049">
    <property type="term" value="F:tRNA binding"/>
    <property type="evidence" value="ECO:0007669"/>
    <property type="project" value="UniProtKB-KW"/>
</dbReference>
<dbReference type="GO" id="GO:0103016">
    <property type="term" value="F:tRNA-uridine 2-sulfurtransferase activity"/>
    <property type="evidence" value="ECO:0007669"/>
    <property type="project" value="UniProtKB-EC"/>
</dbReference>
<dbReference type="GO" id="GO:0002143">
    <property type="term" value="P:tRNA wobble position uridine thiolation"/>
    <property type="evidence" value="ECO:0007669"/>
    <property type="project" value="TreeGrafter"/>
</dbReference>
<dbReference type="CDD" id="cd01998">
    <property type="entry name" value="MnmA_TRMU-like"/>
    <property type="match status" value="1"/>
</dbReference>
<dbReference type="FunFam" id="2.30.30.280:FF:000001">
    <property type="entry name" value="tRNA-specific 2-thiouridylase MnmA"/>
    <property type="match status" value="1"/>
</dbReference>
<dbReference type="FunFam" id="3.40.50.620:FF:000302">
    <property type="entry name" value="tRNA-specific 2-thiouridylase MnmA"/>
    <property type="match status" value="1"/>
</dbReference>
<dbReference type="Gene3D" id="2.30.30.280">
    <property type="entry name" value="Adenine nucleotide alpha hydrolases-like domains"/>
    <property type="match status" value="1"/>
</dbReference>
<dbReference type="Gene3D" id="3.40.50.620">
    <property type="entry name" value="HUPs"/>
    <property type="match status" value="1"/>
</dbReference>
<dbReference type="Gene3D" id="2.40.30.10">
    <property type="entry name" value="Translation factors"/>
    <property type="match status" value="1"/>
</dbReference>
<dbReference type="HAMAP" id="MF_00144">
    <property type="entry name" value="tRNA_thiouridyl_MnmA"/>
    <property type="match status" value="1"/>
</dbReference>
<dbReference type="InterPro" id="IPR004506">
    <property type="entry name" value="MnmA-like"/>
</dbReference>
<dbReference type="InterPro" id="IPR046885">
    <property type="entry name" value="MnmA-like_C"/>
</dbReference>
<dbReference type="InterPro" id="IPR046884">
    <property type="entry name" value="MnmA-like_central"/>
</dbReference>
<dbReference type="InterPro" id="IPR023382">
    <property type="entry name" value="MnmA-like_central_sf"/>
</dbReference>
<dbReference type="InterPro" id="IPR014729">
    <property type="entry name" value="Rossmann-like_a/b/a_fold"/>
</dbReference>
<dbReference type="NCBIfam" id="NF001138">
    <property type="entry name" value="PRK00143.1"/>
    <property type="match status" value="1"/>
</dbReference>
<dbReference type="NCBIfam" id="TIGR00420">
    <property type="entry name" value="trmU"/>
    <property type="match status" value="1"/>
</dbReference>
<dbReference type="PANTHER" id="PTHR11933:SF5">
    <property type="entry name" value="MITOCHONDRIAL TRNA-SPECIFIC 2-THIOURIDYLASE 1"/>
    <property type="match status" value="1"/>
</dbReference>
<dbReference type="PANTHER" id="PTHR11933">
    <property type="entry name" value="TRNA 5-METHYLAMINOMETHYL-2-THIOURIDYLATE -METHYLTRANSFERASE"/>
    <property type="match status" value="1"/>
</dbReference>
<dbReference type="Pfam" id="PF03054">
    <property type="entry name" value="tRNA_Me_trans"/>
    <property type="match status" value="1"/>
</dbReference>
<dbReference type="Pfam" id="PF20258">
    <property type="entry name" value="tRNA_Me_trans_C"/>
    <property type="match status" value="1"/>
</dbReference>
<dbReference type="Pfam" id="PF20259">
    <property type="entry name" value="tRNA_Me_trans_M"/>
    <property type="match status" value="1"/>
</dbReference>
<dbReference type="SUPFAM" id="SSF52402">
    <property type="entry name" value="Adenine nucleotide alpha hydrolases-like"/>
    <property type="match status" value="1"/>
</dbReference>
<keyword id="KW-0067">ATP-binding</keyword>
<keyword id="KW-0963">Cytoplasm</keyword>
<keyword id="KW-1015">Disulfide bond</keyword>
<keyword id="KW-0547">Nucleotide-binding</keyword>
<keyword id="KW-0694">RNA-binding</keyword>
<keyword id="KW-0808">Transferase</keyword>
<keyword id="KW-0819">tRNA processing</keyword>
<keyword id="KW-0820">tRNA-binding</keyword>
<feature type="chain" id="PRO_1000198635" description="tRNA-specific 2-thiouridylase MnmA">
    <location>
        <begin position="1"/>
        <end position="358"/>
    </location>
</feature>
<feature type="region of interest" description="Interaction with tRNA" evidence="1">
    <location>
        <begin position="151"/>
        <end position="153"/>
    </location>
</feature>
<feature type="active site" description="Nucleophile" evidence="1">
    <location>
        <position position="103"/>
    </location>
</feature>
<feature type="active site" description="Cysteine persulfide intermediate" evidence="1">
    <location>
        <position position="201"/>
    </location>
</feature>
<feature type="binding site" evidence="1">
    <location>
        <begin position="6"/>
        <end position="13"/>
    </location>
    <ligand>
        <name>ATP</name>
        <dbReference type="ChEBI" id="CHEBI:30616"/>
    </ligand>
</feature>
<feature type="binding site" evidence="1">
    <location>
        <position position="32"/>
    </location>
    <ligand>
        <name>ATP</name>
        <dbReference type="ChEBI" id="CHEBI:30616"/>
    </ligand>
</feature>
<feature type="binding site" evidence="1">
    <location>
        <position position="127"/>
    </location>
    <ligand>
        <name>ATP</name>
        <dbReference type="ChEBI" id="CHEBI:30616"/>
    </ligand>
</feature>
<feature type="site" description="Interaction with tRNA" evidence="1">
    <location>
        <position position="128"/>
    </location>
</feature>
<feature type="site" description="Interaction with tRNA" evidence="1">
    <location>
        <position position="337"/>
    </location>
</feature>
<feature type="disulfide bond" description="Alternate" evidence="1">
    <location>
        <begin position="103"/>
        <end position="201"/>
    </location>
</feature>
<accession>B9KBD1</accession>
<evidence type="ECO:0000255" key="1">
    <source>
        <dbReference type="HAMAP-Rule" id="MF_00144"/>
    </source>
</evidence>
<gene>
    <name evidence="1" type="primary">mnmA</name>
    <name type="ordered locus">CTN_0151</name>
</gene>
<proteinExistence type="inferred from homology"/>